<accession>B2VHS3</accession>
<organism>
    <name type="scientific">Erwinia tasmaniensis (strain DSM 17950 / CFBP 7177 / CIP 109463 / NCPPB 4357 / Et1/99)</name>
    <dbReference type="NCBI Taxonomy" id="465817"/>
    <lineage>
        <taxon>Bacteria</taxon>
        <taxon>Pseudomonadati</taxon>
        <taxon>Pseudomonadota</taxon>
        <taxon>Gammaproteobacteria</taxon>
        <taxon>Enterobacterales</taxon>
        <taxon>Erwiniaceae</taxon>
        <taxon>Erwinia</taxon>
    </lineage>
</organism>
<keyword id="KW-0414">Isoprene biosynthesis</keyword>
<keyword id="KW-0460">Magnesium</keyword>
<keyword id="KW-0479">Metal-binding</keyword>
<keyword id="KW-1185">Reference proteome</keyword>
<keyword id="KW-0784">Thiamine biosynthesis</keyword>
<keyword id="KW-0786">Thiamine pyrophosphate</keyword>
<keyword id="KW-0808">Transferase</keyword>
<comment type="function">
    <text evidence="1">Catalyzes the acyloin condensation reaction between C atoms 2 and 3 of pyruvate and glyceraldehyde 3-phosphate to yield 1-deoxy-D-xylulose-5-phosphate (DXP).</text>
</comment>
<comment type="catalytic activity">
    <reaction evidence="1">
        <text>D-glyceraldehyde 3-phosphate + pyruvate + H(+) = 1-deoxy-D-xylulose 5-phosphate + CO2</text>
        <dbReference type="Rhea" id="RHEA:12605"/>
        <dbReference type="ChEBI" id="CHEBI:15361"/>
        <dbReference type="ChEBI" id="CHEBI:15378"/>
        <dbReference type="ChEBI" id="CHEBI:16526"/>
        <dbReference type="ChEBI" id="CHEBI:57792"/>
        <dbReference type="ChEBI" id="CHEBI:59776"/>
        <dbReference type="EC" id="2.2.1.7"/>
    </reaction>
</comment>
<comment type="cofactor">
    <cofactor evidence="1">
        <name>Mg(2+)</name>
        <dbReference type="ChEBI" id="CHEBI:18420"/>
    </cofactor>
    <text evidence="1">Binds 1 Mg(2+) ion per subunit.</text>
</comment>
<comment type="cofactor">
    <cofactor evidence="1">
        <name>thiamine diphosphate</name>
        <dbReference type="ChEBI" id="CHEBI:58937"/>
    </cofactor>
    <text evidence="1">Binds 1 thiamine pyrophosphate per subunit.</text>
</comment>
<comment type="pathway">
    <text evidence="1">Metabolic intermediate biosynthesis; 1-deoxy-D-xylulose 5-phosphate biosynthesis; 1-deoxy-D-xylulose 5-phosphate from D-glyceraldehyde 3-phosphate and pyruvate: step 1/1.</text>
</comment>
<comment type="subunit">
    <text evidence="1">Homodimer.</text>
</comment>
<comment type="similarity">
    <text evidence="1">Belongs to the transketolase family. DXPS subfamily.</text>
</comment>
<sequence length="621" mass="67438">MSFETAKYPTLALASTVQELRLLPKESLPTLCDELRQYLLDSVSRSSGHFASGLGVVELTVALHYVYNTPFDHLIWDVGHQAYPHKILTGRRDRIGTIRQKNGLHPFPWRDESEYDVLNVGHSSTSISAGLGMAVAAGKEAQGRRTACVIGDGAITAGMAFEAMNHAGDCKADLLVVLNDNEMSISENVGALNNRLAQILSGKTYSRLRESGKKVLDGLPPIKELVKRTEEHLKGMVVPGTLFEELGFNYIGPVDGHDVLALVHTLRNMRALKGPQFLHVMTKKGKGYAPAEKDPISWHAVPKFDPASGLLPKSAEGLPSYSKIFGQWLSETAAADDRLMAVTPAMREGSGMVSFSRDYPQQYFDVAIAEQHAVTFAAGLAIGGYKPVVAIYSTFLQRAYDQLIHDVAIQKLPVLFAIDRGGIVGADGQTHQGAFDIAFLRCIPDMVIMTPSDENECRQMLYTGYHHQGGPSAVRYPRGNGTGAPLEALASLPLGKGVVKRRGEKMAILNFGTLLPQAAEVAEAINATLVDMRFVKPLDEALVLELAAQHQSLITLEEGSIKGGAGSGVNELLMAKRRAIPVLNIGLPDEFIPPGTQDEIRSDYQLDADGIQRQIADWLAQ</sequence>
<dbReference type="EC" id="2.2.1.7" evidence="1"/>
<dbReference type="EMBL" id="CU468135">
    <property type="protein sequence ID" value="CAO97573.1"/>
    <property type="molecule type" value="Genomic_DNA"/>
</dbReference>
<dbReference type="RefSeq" id="WP_012442238.1">
    <property type="nucleotide sequence ID" value="NC_010694.1"/>
</dbReference>
<dbReference type="SMR" id="B2VHS3"/>
<dbReference type="STRING" id="465817.ETA_25270"/>
<dbReference type="KEGG" id="eta:ETA_25270"/>
<dbReference type="eggNOG" id="COG1154">
    <property type="taxonomic scope" value="Bacteria"/>
</dbReference>
<dbReference type="HOGENOM" id="CLU_009227_1_4_6"/>
<dbReference type="OrthoDB" id="9803371at2"/>
<dbReference type="UniPathway" id="UPA00064">
    <property type="reaction ID" value="UER00091"/>
</dbReference>
<dbReference type="Proteomes" id="UP000001726">
    <property type="component" value="Chromosome"/>
</dbReference>
<dbReference type="GO" id="GO:0005829">
    <property type="term" value="C:cytosol"/>
    <property type="evidence" value="ECO:0007669"/>
    <property type="project" value="TreeGrafter"/>
</dbReference>
<dbReference type="GO" id="GO:0008661">
    <property type="term" value="F:1-deoxy-D-xylulose-5-phosphate synthase activity"/>
    <property type="evidence" value="ECO:0007669"/>
    <property type="project" value="UniProtKB-UniRule"/>
</dbReference>
<dbReference type="GO" id="GO:0000287">
    <property type="term" value="F:magnesium ion binding"/>
    <property type="evidence" value="ECO:0007669"/>
    <property type="project" value="UniProtKB-UniRule"/>
</dbReference>
<dbReference type="GO" id="GO:0030976">
    <property type="term" value="F:thiamine pyrophosphate binding"/>
    <property type="evidence" value="ECO:0007669"/>
    <property type="project" value="UniProtKB-UniRule"/>
</dbReference>
<dbReference type="GO" id="GO:0052865">
    <property type="term" value="P:1-deoxy-D-xylulose 5-phosphate biosynthetic process"/>
    <property type="evidence" value="ECO:0007669"/>
    <property type="project" value="UniProtKB-UniPathway"/>
</dbReference>
<dbReference type="GO" id="GO:0019288">
    <property type="term" value="P:isopentenyl diphosphate biosynthetic process, methylerythritol 4-phosphate pathway"/>
    <property type="evidence" value="ECO:0007669"/>
    <property type="project" value="TreeGrafter"/>
</dbReference>
<dbReference type="GO" id="GO:0016114">
    <property type="term" value="P:terpenoid biosynthetic process"/>
    <property type="evidence" value="ECO:0007669"/>
    <property type="project" value="UniProtKB-UniRule"/>
</dbReference>
<dbReference type="GO" id="GO:0009228">
    <property type="term" value="P:thiamine biosynthetic process"/>
    <property type="evidence" value="ECO:0007669"/>
    <property type="project" value="UniProtKB-UniRule"/>
</dbReference>
<dbReference type="CDD" id="cd02007">
    <property type="entry name" value="TPP_DXS"/>
    <property type="match status" value="1"/>
</dbReference>
<dbReference type="CDD" id="cd07033">
    <property type="entry name" value="TPP_PYR_DXS_TK_like"/>
    <property type="match status" value="1"/>
</dbReference>
<dbReference type="FunFam" id="3.40.50.920:FF:000002">
    <property type="entry name" value="1-deoxy-D-xylulose-5-phosphate synthase"/>
    <property type="match status" value="1"/>
</dbReference>
<dbReference type="FunFam" id="3.40.50.970:FF:000005">
    <property type="entry name" value="1-deoxy-D-xylulose-5-phosphate synthase"/>
    <property type="match status" value="1"/>
</dbReference>
<dbReference type="Gene3D" id="3.40.50.920">
    <property type="match status" value="1"/>
</dbReference>
<dbReference type="Gene3D" id="3.40.50.970">
    <property type="match status" value="2"/>
</dbReference>
<dbReference type="HAMAP" id="MF_00315">
    <property type="entry name" value="DXP_synth"/>
    <property type="match status" value="1"/>
</dbReference>
<dbReference type="InterPro" id="IPR005477">
    <property type="entry name" value="Dxylulose-5-P_synthase"/>
</dbReference>
<dbReference type="InterPro" id="IPR029061">
    <property type="entry name" value="THDP-binding"/>
</dbReference>
<dbReference type="InterPro" id="IPR009014">
    <property type="entry name" value="Transketo_C/PFOR_II"/>
</dbReference>
<dbReference type="InterPro" id="IPR005475">
    <property type="entry name" value="Transketolase-like_Pyr-bd"/>
</dbReference>
<dbReference type="InterPro" id="IPR020826">
    <property type="entry name" value="Transketolase_BS"/>
</dbReference>
<dbReference type="InterPro" id="IPR033248">
    <property type="entry name" value="Transketolase_C"/>
</dbReference>
<dbReference type="InterPro" id="IPR049557">
    <property type="entry name" value="Transketolase_CS"/>
</dbReference>
<dbReference type="NCBIfam" id="TIGR00204">
    <property type="entry name" value="dxs"/>
    <property type="match status" value="1"/>
</dbReference>
<dbReference type="NCBIfam" id="NF003933">
    <property type="entry name" value="PRK05444.2-2"/>
    <property type="match status" value="1"/>
</dbReference>
<dbReference type="PANTHER" id="PTHR43322">
    <property type="entry name" value="1-D-DEOXYXYLULOSE 5-PHOSPHATE SYNTHASE-RELATED"/>
    <property type="match status" value="1"/>
</dbReference>
<dbReference type="PANTHER" id="PTHR43322:SF5">
    <property type="entry name" value="1-DEOXY-D-XYLULOSE-5-PHOSPHATE SYNTHASE, CHLOROPLASTIC"/>
    <property type="match status" value="1"/>
</dbReference>
<dbReference type="Pfam" id="PF13292">
    <property type="entry name" value="DXP_synthase_N"/>
    <property type="match status" value="1"/>
</dbReference>
<dbReference type="Pfam" id="PF02779">
    <property type="entry name" value="Transket_pyr"/>
    <property type="match status" value="1"/>
</dbReference>
<dbReference type="Pfam" id="PF02780">
    <property type="entry name" value="Transketolase_C"/>
    <property type="match status" value="1"/>
</dbReference>
<dbReference type="SMART" id="SM00861">
    <property type="entry name" value="Transket_pyr"/>
    <property type="match status" value="1"/>
</dbReference>
<dbReference type="SUPFAM" id="SSF52518">
    <property type="entry name" value="Thiamin diphosphate-binding fold (THDP-binding)"/>
    <property type="match status" value="2"/>
</dbReference>
<dbReference type="SUPFAM" id="SSF52922">
    <property type="entry name" value="TK C-terminal domain-like"/>
    <property type="match status" value="1"/>
</dbReference>
<dbReference type="PROSITE" id="PS00801">
    <property type="entry name" value="TRANSKETOLASE_1"/>
    <property type="match status" value="1"/>
</dbReference>
<dbReference type="PROSITE" id="PS00802">
    <property type="entry name" value="TRANSKETOLASE_2"/>
    <property type="match status" value="1"/>
</dbReference>
<reference key="1">
    <citation type="journal article" date="2008" name="Environ. Microbiol.">
        <title>The genome of Erwinia tasmaniensis strain Et1/99, a non-pathogenic bacterium in the genus Erwinia.</title>
        <authorList>
            <person name="Kube M."/>
            <person name="Migdoll A.M."/>
            <person name="Mueller I."/>
            <person name="Kuhl H."/>
            <person name="Beck A."/>
            <person name="Reinhardt R."/>
            <person name="Geider K."/>
        </authorList>
    </citation>
    <scope>NUCLEOTIDE SEQUENCE [LARGE SCALE GENOMIC DNA]</scope>
    <source>
        <strain>DSM 17950 / CFBP 7177 / CIP 109463 / NCPPB 4357 / Et1/99</strain>
    </source>
</reference>
<feature type="chain" id="PRO_1000115741" description="1-deoxy-D-xylulose-5-phosphate synthase">
    <location>
        <begin position="1"/>
        <end position="621"/>
    </location>
</feature>
<feature type="binding site" evidence="1">
    <location>
        <position position="80"/>
    </location>
    <ligand>
        <name>thiamine diphosphate</name>
        <dbReference type="ChEBI" id="CHEBI:58937"/>
    </ligand>
</feature>
<feature type="binding site" evidence="1">
    <location>
        <begin position="121"/>
        <end position="123"/>
    </location>
    <ligand>
        <name>thiamine diphosphate</name>
        <dbReference type="ChEBI" id="CHEBI:58937"/>
    </ligand>
</feature>
<feature type="binding site" evidence="1">
    <location>
        <position position="152"/>
    </location>
    <ligand>
        <name>Mg(2+)</name>
        <dbReference type="ChEBI" id="CHEBI:18420"/>
    </ligand>
</feature>
<feature type="binding site" evidence="1">
    <location>
        <begin position="153"/>
        <end position="154"/>
    </location>
    <ligand>
        <name>thiamine diphosphate</name>
        <dbReference type="ChEBI" id="CHEBI:58937"/>
    </ligand>
</feature>
<feature type="binding site" evidence="1">
    <location>
        <position position="181"/>
    </location>
    <ligand>
        <name>Mg(2+)</name>
        <dbReference type="ChEBI" id="CHEBI:18420"/>
    </ligand>
</feature>
<feature type="binding site" evidence="1">
    <location>
        <position position="181"/>
    </location>
    <ligand>
        <name>thiamine diphosphate</name>
        <dbReference type="ChEBI" id="CHEBI:58937"/>
    </ligand>
</feature>
<feature type="binding site" evidence="1">
    <location>
        <position position="288"/>
    </location>
    <ligand>
        <name>thiamine diphosphate</name>
        <dbReference type="ChEBI" id="CHEBI:58937"/>
    </ligand>
</feature>
<feature type="binding site" evidence="1">
    <location>
        <position position="370"/>
    </location>
    <ligand>
        <name>thiamine diphosphate</name>
        <dbReference type="ChEBI" id="CHEBI:58937"/>
    </ligand>
</feature>
<gene>
    <name evidence="1" type="primary">dxs</name>
    <name type="ordered locus">ETA_25270</name>
</gene>
<proteinExistence type="inferred from homology"/>
<name>DXS_ERWT9</name>
<protein>
    <recommendedName>
        <fullName evidence="1">1-deoxy-D-xylulose-5-phosphate synthase</fullName>
        <ecNumber evidence="1">2.2.1.7</ecNumber>
    </recommendedName>
    <alternativeName>
        <fullName evidence="1">1-deoxyxylulose-5-phosphate synthase</fullName>
        <shortName evidence="1">DXP synthase</shortName>
        <shortName evidence="1">DXPS</shortName>
    </alternativeName>
</protein>
<evidence type="ECO:0000255" key="1">
    <source>
        <dbReference type="HAMAP-Rule" id="MF_00315"/>
    </source>
</evidence>